<sequence length="445" mass="52256">MVRMEDIISLAKRKGFVFQSSEVYGGLSGVWDYGPLGIELKENIKREWWKSMVYLHENIVGLDSAIFMRSEIWKASGHIDGFSDSMVDCKDCKSRFRADFVDLSKNCPNCKVGNNFTSPRNFNLMFKTHIGVVEDSSSEIYLRPETAQGIFVNFRNVLDSSRLKIPFGIAQVGKAFRNEIVAKNFIFRTCEFEQMEMQFFVHPKQIDEWFCYWQQNRMNFFIETLKIRPDRLRLKAHNSTELAHYAKSAFDIEYEFPFGFQEIEGIHNRGNYDLTQHSKFSNNSKVFEYHDLLTKERYVPYVIETSAGLTRSVLMTLCDAYSEEELSDGDKRIVLRLHPKLAPYKIAIFPLVKKVELVEVARRIYVELCDDFHIFYDDSGTIGKRYRRQDEIGTPYCVTVDYNTIEDETVTVRERNNMTQKRIFINDLYSYIKTEILNYKEDVNK</sequence>
<reference key="1">
    <citation type="journal article" date="2006" name="BMC Genomics">
        <title>Comparative genome analysis: selection pressure on the Borrelia vls cassettes is essential for infectivity.</title>
        <authorList>
            <person name="Gloeckner G."/>
            <person name="Schulte-Spechtel U."/>
            <person name="Schilhabel M."/>
            <person name="Felder M."/>
            <person name="Suehnel J."/>
            <person name="Wilske B."/>
            <person name="Platzer M."/>
        </authorList>
    </citation>
    <scope>NUCLEOTIDE SEQUENCE [LARGE SCALE GENOMIC DNA]</scope>
    <source>
        <strain>PKo</strain>
    </source>
</reference>
<reference key="2">
    <citation type="journal article" date="2011" name="J. Bacteriol.">
        <title>Whole-genome sequences of two Borrelia afzelii and two Borrelia garinii Lyme disease agent isolates.</title>
        <authorList>
            <person name="Casjens S.R."/>
            <person name="Mongodin E.F."/>
            <person name="Qiu W.G."/>
            <person name="Dunn J.J."/>
            <person name="Luft B.J."/>
            <person name="Fraser-Liggett C.M."/>
            <person name="Schutzer S.E."/>
        </authorList>
    </citation>
    <scope>NUCLEOTIDE SEQUENCE [LARGE SCALE GENOMIC DNA]</scope>
    <source>
        <strain>PKo</strain>
    </source>
</reference>
<protein>
    <recommendedName>
        <fullName evidence="1">Glycine--tRNA ligase</fullName>
        <ecNumber evidence="1">6.1.1.14</ecNumber>
    </recommendedName>
    <alternativeName>
        <fullName evidence="1">Glycyl-tRNA synthetase</fullName>
        <shortName evidence="1">GlyRS</shortName>
    </alternativeName>
</protein>
<dbReference type="EC" id="6.1.1.14" evidence="1"/>
<dbReference type="EMBL" id="CP000395">
    <property type="protein sequence ID" value="ABH01636.1"/>
    <property type="molecule type" value="Genomic_DNA"/>
</dbReference>
<dbReference type="EMBL" id="CP002933">
    <property type="protein sequence ID" value="AEL69596.1"/>
    <property type="molecule type" value="Genomic_DNA"/>
</dbReference>
<dbReference type="RefSeq" id="WP_011600985.1">
    <property type="nucleotide sequence ID" value="NC_008277.1"/>
</dbReference>
<dbReference type="SMR" id="Q0SNE2"/>
<dbReference type="STRING" id="29518.BLA32_02460"/>
<dbReference type="KEGG" id="baf:BAPKO_0380"/>
<dbReference type="KEGG" id="bafz:BafPKo_0370"/>
<dbReference type="PATRIC" id="fig|390236.22.peg.363"/>
<dbReference type="eggNOG" id="COG0423">
    <property type="taxonomic scope" value="Bacteria"/>
</dbReference>
<dbReference type="HOGENOM" id="CLU_015515_2_1_12"/>
<dbReference type="OrthoDB" id="9760853at2"/>
<dbReference type="Proteomes" id="UP000005216">
    <property type="component" value="Chromosome"/>
</dbReference>
<dbReference type="GO" id="GO:0005737">
    <property type="term" value="C:cytoplasm"/>
    <property type="evidence" value="ECO:0007669"/>
    <property type="project" value="UniProtKB-SubCell"/>
</dbReference>
<dbReference type="GO" id="GO:0005524">
    <property type="term" value="F:ATP binding"/>
    <property type="evidence" value="ECO:0007669"/>
    <property type="project" value="UniProtKB-UniRule"/>
</dbReference>
<dbReference type="GO" id="GO:0004820">
    <property type="term" value="F:glycine-tRNA ligase activity"/>
    <property type="evidence" value="ECO:0000250"/>
    <property type="project" value="UniProtKB"/>
</dbReference>
<dbReference type="GO" id="GO:0046983">
    <property type="term" value="F:protein dimerization activity"/>
    <property type="evidence" value="ECO:0000250"/>
    <property type="project" value="UniProtKB"/>
</dbReference>
<dbReference type="GO" id="GO:0006426">
    <property type="term" value="P:glycyl-tRNA aminoacylation"/>
    <property type="evidence" value="ECO:0007669"/>
    <property type="project" value="UniProtKB-UniRule"/>
</dbReference>
<dbReference type="CDD" id="cd00774">
    <property type="entry name" value="GlyRS-like_core"/>
    <property type="match status" value="1"/>
</dbReference>
<dbReference type="CDD" id="cd00858">
    <property type="entry name" value="GlyRS_anticodon"/>
    <property type="match status" value="1"/>
</dbReference>
<dbReference type="FunFam" id="3.30.930.10:FF:000014">
    <property type="entry name" value="Glycine--tRNA ligase"/>
    <property type="match status" value="1"/>
</dbReference>
<dbReference type="FunFam" id="3.40.50.800:FF:000002">
    <property type="entry name" value="Glycine--tRNA ligase"/>
    <property type="match status" value="1"/>
</dbReference>
<dbReference type="Gene3D" id="3.40.50.800">
    <property type="entry name" value="Anticodon-binding domain"/>
    <property type="match status" value="1"/>
</dbReference>
<dbReference type="Gene3D" id="3.30.930.10">
    <property type="entry name" value="Bira Bifunctional Protein, Domain 2"/>
    <property type="match status" value="1"/>
</dbReference>
<dbReference type="HAMAP" id="MF_00253_B">
    <property type="entry name" value="Gly_tRNA_synth_B"/>
    <property type="match status" value="1"/>
</dbReference>
<dbReference type="InterPro" id="IPR002314">
    <property type="entry name" value="aa-tRNA-synt_IIb"/>
</dbReference>
<dbReference type="InterPro" id="IPR006195">
    <property type="entry name" value="aa-tRNA-synth_II"/>
</dbReference>
<dbReference type="InterPro" id="IPR045864">
    <property type="entry name" value="aa-tRNA-synth_II/BPL/LPL"/>
</dbReference>
<dbReference type="InterPro" id="IPR004154">
    <property type="entry name" value="Anticodon-bd"/>
</dbReference>
<dbReference type="InterPro" id="IPR036621">
    <property type="entry name" value="Anticodon-bd_dom_sf"/>
</dbReference>
<dbReference type="InterPro" id="IPR027031">
    <property type="entry name" value="Gly-tRNA_synthase/POLG2"/>
</dbReference>
<dbReference type="InterPro" id="IPR022961">
    <property type="entry name" value="Gly_tRNA_ligase_bac"/>
</dbReference>
<dbReference type="InterPro" id="IPR033731">
    <property type="entry name" value="GlyRS-like_core"/>
</dbReference>
<dbReference type="InterPro" id="IPR002315">
    <property type="entry name" value="tRNA-synt_gly"/>
</dbReference>
<dbReference type="NCBIfam" id="TIGR00389">
    <property type="entry name" value="glyS_dimeric"/>
    <property type="match status" value="1"/>
</dbReference>
<dbReference type="NCBIfam" id="NF003211">
    <property type="entry name" value="PRK04173.1"/>
    <property type="match status" value="1"/>
</dbReference>
<dbReference type="PANTHER" id="PTHR10745:SF8">
    <property type="entry name" value="DNA POLYMERASE SUBUNIT GAMMA-2, MITOCHONDRIAL"/>
    <property type="match status" value="1"/>
</dbReference>
<dbReference type="PANTHER" id="PTHR10745">
    <property type="entry name" value="GLYCYL-TRNA SYNTHETASE/DNA POLYMERASE SUBUNIT GAMMA-2"/>
    <property type="match status" value="1"/>
</dbReference>
<dbReference type="Pfam" id="PF03129">
    <property type="entry name" value="HGTP_anticodon"/>
    <property type="match status" value="1"/>
</dbReference>
<dbReference type="Pfam" id="PF00587">
    <property type="entry name" value="tRNA-synt_2b"/>
    <property type="match status" value="1"/>
</dbReference>
<dbReference type="PRINTS" id="PR01043">
    <property type="entry name" value="TRNASYNTHGLY"/>
</dbReference>
<dbReference type="SUPFAM" id="SSF52954">
    <property type="entry name" value="Class II aaRS ABD-related"/>
    <property type="match status" value="1"/>
</dbReference>
<dbReference type="SUPFAM" id="SSF55681">
    <property type="entry name" value="Class II aaRS and biotin synthetases"/>
    <property type="match status" value="1"/>
</dbReference>
<dbReference type="PROSITE" id="PS50862">
    <property type="entry name" value="AA_TRNA_LIGASE_II"/>
    <property type="match status" value="1"/>
</dbReference>
<keyword id="KW-0030">Aminoacyl-tRNA synthetase</keyword>
<keyword id="KW-0067">ATP-binding</keyword>
<keyword id="KW-0963">Cytoplasm</keyword>
<keyword id="KW-0436">Ligase</keyword>
<keyword id="KW-0547">Nucleotide-binding</keyword>
<keyword id="KW-0648">Protein biosynthesis</keyword>
<accession>Q0SNE2</accession>
<accession>G0IS15</accession>
<name>SYG_BORAP</name>
<feature type="chain" id="PRO_1000047371" description="Glycine--tRNA ligase">
    <location>
        <begin position="1"/>
        <end position="445"/>
    </location>
</feature>
<feature type="binding site" evidence="1">
    <location>
        <position position="97"/>
    </location>
    <ligand>
        <name>substrate</name>
    </ligand>
</feature>
<feature type="binding site" evidence="1">
    <location>
        <position position="145"/>
    </location>
    <ligand>
        <name>substrate</name>
    </ligand>
</feature>
<feature type="binding site" evidence="1">
    <location>
        <begin position="177"/>
        <end position="179"/>
    </location>
    <ligand>
        <name>ATP</name>
        <dbReference type="ChEBI" id="CHEBI:30616"/>
    </ligand>
</feature>
<feature type="binding site" evidence="1">
    <location>
        <begin position="187"/>
        <end position="192"/>
    </location>
    <ligand>
        <name>ATP</name>
        <dbReference type="ChEBI" id="CHEBI:30616"/>
    </ligand>
</feature>
<feature type="binding site" evidence="1">
    <location>
        <begin position="192"/>
        <end position="196"/>
    </location>
    <ligand>
        <name>substrate</name>
    </ligand>
</feature>
<feature type="binding site" evidence="1">
    <location>
        <begin position="262"/>
        <end position="263"/>
    </location>
    <ligand>
        <name>ATP</name>
        <dbReference type="ChEBI" id="CHEBI:30616"/>
    </ligand>
</feature>
<feature type="binding site" evidence="1">
    <location>
        <begin position="304"/>
        <end position="308"/>
    </location>
    <ligand>
        <name>substrate</name>
    </ligand>
</feature>
<feature type="binding site" evidence="1">
    <location>
        <begin position="308"/>
        <end position="311"/>
    </location>
    <ligand>
        <name>ATP</name>
        <dbReference type="ChEBI" id="CHEBI:30616"/>
    </ligand>
</feature>
<organism>
    <name type="scientific">Borreliella afzelii (strain PKo)</name>
    <name type="common">Borrelia afzelii</name>
    <dbReference type="NCBI Taxonomy" id="390236"/>
    <lineage>
        <taxon>Bacteria</taxon>
        <taxon>Pseudomonadati</taxon>
        <taxon>Spirochaetota</taxon>
        <taxon>Spirochaetia</taxon>
        <taxon>Spirochaetales</taxon>
        <taxon>Borreliaceae</taxon>
        <taxon>Borreliella</taxon>
    </lineage>
</organism>
<evidence type="ECO:0000255" key="1">
    <source>
        <dbReference type="HAMAP-Rule" id="MF_00253"/>
    </source>
</evidence>
<comment type="function">
    <text evidence="1">Catalyzes the attachment of glycine to tRNA(Gly).</text>
</comment>
<comment type="catalytic activity">
    <reaction evidence="1">
        <text>tRNA(Gly) + glycine + ATP = glycyl-tRNA(Gly) + AMP + diphosphate</text>
        <dbReference type="Rhea" id="RHEA:16013"/>
        <dbReference type="Rhea" id="RHEA-COMP:9664"/>
        <dbReference type="Rhea" id="RHEA-COMP:9683"/>
        <dbReference type="ChEBI" id="CHEBI:30616"/>
        <dbReference type="ChEBI" id="CHEBI:33019"/>
        <dbReference type="ChEBI" id="CHEBI:57305"/>
        <dbReference type="ChEBI" id="CHEBI:78442"/>
        <dbReference type="ChEBI" id="CHEBI:78522"/>
        <dbReference type="ChEBI" id="CHEBI:456215"/>
        <dbReference type="EC" id="6.1.1.14"/>
    </reaction>
</comment>
<comment type="subunit">
    <text evidence="1">Homodimer.</text>
</comment>
<comment type="subcellular location">
    <subcellularLocation>
        <location evidence="1">Cytoplasm</location>
    </subcellularLocation>
</comment>
<comment type="similarity">
    <text evidence="1">Belongs to the class-II aminoacyl-tRNA synthetase family.</text>
</comment>
<proteinExistence type="inferred from homology"/>
<gene>
    <name evidence="1" type="primary">glyQS</name>
    <name type="ordered locus">BAPKO_0380</name>
    <name type="ordered locus">BafPKo_0370</name>
</gene>